<proteinExistence type="inferred from homology"/>
<accession>B3R4D1</accession>
<keyword id="KW-0030">Aminoacyl-tRNA synthetase</keyword>
<keyword id="KW-0067">ATP-binding</keyword>
<keyword id="KW-0963">Cytoplasm</keyword>
<keyword id="KW-0436">Ligase</keyword>
<keyword id="KW-0479">Metal-binding</keyword>
<keyword id="KW-0547">Nucleotide-binding</keyword>
<keyword id="KW-0648">Protein biosynthesis</keyword>
<keyword id="KW-0862">Zinc</keyword>
<name>SYC_CUPTR</name>
<feature type="chain" id="PRO_1000090829" description="Cysteine--tRNA ligase">
    <location>
        <begin position="1"/>
        <end position="462"/>
    </location>
</feature>
<feature type="short sequence motif" description="'HIGH' region">
    <location>
        <begin position="32"/>
        <end position="42"/>
    </location>
</feature>
<feature type="short sequence motif" description="'KMSKS' region">
    <location>
        <begin position="271"/>
        <end position="275"/>
    </location>
</feature>
<feature type="binding site" evidence="1">
    <location>
        <position position="30"/>
    </location>
    <ligand>
        <name>Zn(2+)</name>
        <dbReference type="ChEBI" id="CHEBI:29105"/>
    </ligand>
</feature>
<feature type="binding site" evidence="1">
    <location>
        <position position="214"/>
    </location>
    <ligand>
        <name>Zn(2+)</name>
        <dbReference type="ChEBI" id="CHEBI:29105"/>
    </ligand>
</feature>
<feature type="binding site" evidence="1">
    <location>
        <position position="239"/>
    </location>
    <ligand>
        <name>Zn(2+)</name>
        <dbReference type="ChEBI" id="CHEBI:29105"/>
    </ligand>
</feature>
<feature type="binding site" evidence="1">
    <location>
        <position position="243"/>
    </location>
    <ligand>
        <name>Zn(2+)</name>
        <dbReference type="ChEBI" id="CHEBI:29105"/>
    </ligand>
</feature>
<feature type="binding site" evidence="1">
    <location>
        <position position="274"/>
    </location>
    <ligand>
        <name>ATP</name>
        <dbReference type="ChEBI" id="CHEBI:30616"/>
    </ligand>
</feature>
<protein>
    <recommendedName>
        <fullName evidence="1">Cysteine--tRNA ligase</fullName>
        <ecNumber evidence="1">6.1.1.16</ecNumber>
    </recommendedName>
    <alternativeName>
        <fullName evidence="1">Cysteinyl-tRNA synthetase</fullName>
        <shortName evidence="1">CysRS</shortName>
    </alternativeName>
</protein>
<organism>
    <name type="scientific">Cupriavidus taiwanensis (strain DSM 17343 / BCRC 17206 / CCUG 44338 / CIP 107171 / LMG 19424 / R1)</name>
    <name type="common">Ralstonia taiwanensis (strain LMG 19424)</name>
    <dbReference type="NCBI Taxonomy" id="977880"/>
    <lineage>
        <taxon>Bacteria</taxon>
        <taxon>Pseudomonadati</taxon>
        <taxon>Pseudomonadota</taxon>
        <taxon>Betaproteobacteria</taxon>
        <taxon>Burkholderiales</taxon>
        <taxon>Burkholderiaceae</taxon>
        <taxon>Cupriavidus</taxon>
    </lineage>
</organism>
<sequence>MQPLNIYNTLAREKQPFVPIEPGKVRMYVCGMTVYDYCHVGHARVMVVFDMVHRWLRAAGYEVTYVQNITDIDDKIIRRAVENGETIGELTTRFIQYMHEDAAALGVIRPDHEPRATDYVPQMLDMIGKLEAKGLAYQASDGDVNYSVRKFDGYGKLSGKSLEDLRAGERVSANDAKQDPLDFVLWKSAKASEPPESKWDSKWGAGRPGWHIECSAMSCALLGEHFDIHGGGADLQFPHHENEIAQSEGASGKPFVNLWMHNGFVRINDEKMSKSLGNFFTIREVLKAYDAEVVRFFILRAHYRSPLNYSDAHLDDARHALTRLYTALKDSQPGGCAVDWDEPHAKRFAEAMGDDFNTPIAMSVLFDLASEINRTGSTAAARQLKGLAGTLGLLERDPHTFLQGGKSADGPSPDEIEKLIAARKAAKAERNFAEADRIRAQLLEAGIVLEDKPGGATEWRRA</sequence>
<dbReference type="EC" id="6.1.1.16" evidence="1"/>
<dbReference type="EMBL" id="CU633749">
    <property type="protein sequence ID" value="CAQ69163.1"/>
    <property type="molecule type" value="Genomic_DNA"/>
</dbReference>
<dbReference type="RefSeq" id="WP_012352491.1">
    <property type="nucleotide sequence ID" value="NC_010528.1"/>
</dbReference>
<dbReference type="SMR" id="B3R4D1"/>
<dbReference type="GeneID" id="29762191"/>
<dbReference type="KEGG" id="cti:RALTA_A1199"/>
<dbReference type="eggNOG" id="COG0215">
    <property type="taxonomic scope" value="Bacteria"/>
</dbReference>
<dbReference type="HOGENOM" id="CLU_013528_0_1_4"/>
<dbReference type="BioCyc" id="CTAI977880:RALTA_RS05730-MONOMER"/>
<dbReference type="Proteomes" id="UP000001692">
    <property type="component" value="Chromosome 1"/>
</dbReference>
<dbReference type="GO" id="GO:0005829">
    <property type="term" value="C:cytosol"/>
    <property type="evidence" value="ECO:0007669"/>
    <property type="project" value="TreeGrafter"/>
</dbReference>
<dbReference type="GO" id="GO:0005524">
    <property type="term" value="F:ATP binding"/>
    <property type="evidence" value="ECO:0007669"/>
    <property type="project" value="UniProtKB-UniRule"/>
</dbReference>
<dbReference type="GO" id="GO:0004817">
    <property type="term" value="F:cysteine-tRNA ligase activity"/>
    <property type="evidence" value="ECO:0007669"/>
    <property type="project" value="UniProtKB-UniRule"/>
</dbReference>
<dbReference type="GO" id="GO:0008270">
    <property type="term" value="F:zinc ion binding"/>
    <property type="evidence" value="ECO:0007669"/>
    <property type="project" value="UniProtKB-UniRule"/>
</dbReference>
<dbReference type="GO" id="GO:0006423">
    <property type="term" value="P:cysteinyl-tRNA aminoacylation"/>
    <property type="evidence" value="ECO:0007669"/>
    <property type="project" value="UniProtKB-UniRule"/>
</dbReference>
<dbReference type="CDD" id="cd07963">
    <property type="entry name" value="Anticodon_Ia_Cys"/>
    <property type="match status" value="1"/>
</dbReference>
<dbReference type="CDD" id="cd00672">
    <property type="entry name" value="CysRS_core"/>
    <property type="match status" value="1"/>
</dbReference>
<dbReference type="FunFam" id="3.40.50.620:FF:000009">
    <property type="entry name" value="Cysteine--tRNA ligase"/>
    <property type="match status" value="1"/>
</dbReference>
<dbReference type="Gene3D" id="1.20.120.1910">
    <property type="entry name" value="Cysteine-tRNA ligase, C-terminal anti-codon recognition domain"/>
    <property type="match status" value="1"/>
</dbReference>
<dbReference type="Gene3D" id="3.40.50.620">
    <property type="entry name" value="HUPs"/>
    <property type="match status" value="1"/>
</dbReference>
<dbReference type="HAMAP" id="MF_00041">
    <property type="entry name" value="Cys_tRNA_synth"/>
    <property type="match status" value="1"/>
</dbReference>
<dbReference type="InterPro" id="IPR015803">
    <property type="entry name" value="Cys-tRNA-ligase"/>
</dbReference>
<dbReference type="InterPro" id="IPR015273">
    <property type="entry name" value="Cys-tRNA-synt_Ia_DALR"/>
</dbReference>
<dbReference type="InterPro" id="IPR024909">
    <property type="entry name" value="Cys-tRNA/MSH_ligase"/>
</dbReference>
<dbReference type="InterPro" id="IPR056411">
    <property type="entry name" value="CysS_C"/>
</dbReference>
<dbReference type="InterPro" id="IPR014729">
    <property type="entry name" value="Rossmann-like_a/b/a_fold"/>
</dbReference>
<dbReference type="InterPro" id="IPR032678">
    <property type="entry name" value="tRNA-synt_1_cat_dom"/>
</dbReference>
<dbReference type="InterPro" id="IPR009080">
    <property type="entry name" value="tRNAsynth_Ia_anticodon-bd"/>
</dbReference>
<dbReference type="NCBIfam" id="TIGR00435">
    <property type="entry name" value="cysS"/>
    <property type="match status" value="1"/>
</dbReference>
<dbReference type="PANTHER" id="PTHR10890:SF3">
    <property type="entry name" value="CYSTEINE--TRNA LIGASE, CYTOPLASMIC"/>
    <property type="match status" value="1"/>
</dbReference>
<dbReference type="PANTHER" id="PTHR10890">
    <property type="entry name" value="CYSTEINYL-TRNA SYNTHETASE"/>
    <property type="match status" value="1"/>
</dbReference>
<dbReference type="Pfam" id="PF23493">
    <property type="entry name" value="CysS_C"/>
    <property type="match status" value="1"/>
</dbReference>
<dbReference type="Pfam" id="PF09190">
    <property type="entry name" value="DALR_2"/>
    <property type="match status" value="1"/>
</dbReference>
<dbReference type="Pfam" id="PF01406">
    <property type="entry name" value="tRNA-synt_1e"/>
    <property type="match status" value="1"/>
</dbReference>
<dbReference type="PRINTS" id="PR00983">
    <property type="entry name" value="TRNASYNTHCYS"/>
</dbReference>
<dbReference type="SMART" id="SM00840">
    <property type="entry name" value="DALR_2"/>
    <property type="match status" value="1"/>
</dbReference>
<dbReference type="SUPFAM" id="SSF47323">
    <property type="entry name" value="Anticodon-binding domain of a subclass of class I aminoacyl-tRNA synthetases"/>
    <property type="match status" value="1"/>
</dbReference>
<dbReference type="SUPFAM" id="SSF52374">
    <property type="entry name" value="Nucleotidylyl transferase"/>
    <property type="match status" value="1"/>
</dbReference>
<evidence type="ECO:0000255" key="1">
    <source>
        <dbReference type="HAMAP-Rule" id="MF_00041"/>
    </source>
</evidence>
<comment type="catalytic activity">
    <reaction evidence="1">
        <text>tRNA(Cys) + L-cysteine + ATP = L-cysteinyl-tRNA(Cys) + AMP + diphosphate</text>
        <dbReference type="Rhea" id="RHEA:17773"/>
        <dbReference type="Rhea" id="RHEA-COMP:9661"/>
        <dbReference type="Rhea" id="RHEA-COMP:9679"/>
        <dbReference type="ChEBI" id="CHEBI:30616"/>
        <dbReference type="ChEBI" id="CHEBI:33019"/>
        <dbReference type="ChEBI" id="CHEBI:35235"/>
        <dbReference type="ChEBI" id="CHEBI:78442"/>
        <dbReference type="ChEBI" id="CHEBI:78517"/>
        <dbReference type="ChEBI" id="CHEBI:456215"/>
        <dbReference type="EC" id="6.1.1.16"/>
    </reaction>
</comment>
<comment type="cofactor">
    <cofactor evidence="1">
        <name>Zn(2+)</name>
        <dbReference type="ChEBI" id="CHEBI:29105"/>
    </cofactor>
    <text evidence="1">Binds 1 zinc ion per subunit.</text>
</comment>
<comment type="subunit">
    <text evidence="1">Monomer.</text>
</comment>
<comment type="subcellular location">
    <subcellularLocation>
        <location evidence="1">Cytoplasm</location>
    </subcellularLocation>
</comment>
<comment type="similarity">
    <text evidence="1">Belongs to the class-I aminoacyl-tRNA synthetase family.</text>
</comment>
<reference key="1">
    <citation type="journal article" date="2008" name="Genome Res.">
        <title>Genome sequence of the beta-rhizobium Cupriavidus taiwanensis and comparative genomics of rhizobia.</title>
        <authorList>
            <person name="Amadou C."/>
            <person name="Pascal G."/>
            <person name="Mangenot S."/>
            <person name="Glew M."/>
            <person name="Bontemps C."/>
            <person name="Capela D."/>
            <person name="Carrere S."/>
            <person name="Cruveiller S."/>
            <person name="Dossat C."/>
            <person name="Lajus A."/>
            <person name="Marchetti M."/>
            <person name="Poinsot V."/>
            <person name="Rouy Z."/>
            <person name="Servin B."/>
            <person name="Saad M."/>
            <person name="Schenowitz C."/>
            <person name="Barbe V."/>
            <person name="Batut J."/>
            <person name="Medigue C."/>
            <person name="Masson-Boivin C."/>
        </authorList>
    </citation>
    <scope>NUCLEOTIDE SEQUENCE [LARGE SCALE GENOMIC DNA]</scope>
    <source>
        <strain>DSM 17343 / BCRC 17206 / CCUG 44338 / CIP 107171 / LMG 19424 / R1</strain>
    </source>
</reference>
<gene>
    <name evidence="1" type="primary">cysS</name>
    <name type="ordered locus">RALTA_A1199</name>
</gene>